<proteinExistence type="evidence at transcript level"/>
<accession>Q8GYJ4</accession>
<reference key="1">
    <citation type="journal article" date="1997" name="DNA Res.">
        <title>Structural analysis of Arabidopsis thaliana chromosome 5. III. Sequence features of the regions of 1,191,918 bp covered by seventeen physically assigned P1 clones.</title>
        <authorList>
            <person name="Nakamura Y."/>
            <person name="Sato S."/>
            <person name="Kaneko T."/>
            <person name="Kotani H."/>
            <person name="Asamizu E."/>
            <person name="Miyajima N."/>
            <person name="Tabata S."/>
        </authorList>
    </citation>
    <scope>NUCLEOTIDE SEQUENCE [LARGE SCALE GENOMIC DNA]</scope>
    <source>
        <strain>cv. Columbia</strain>
    </source>
</reference>
<reference key="2">
    <citation type="journal article" date="2017" name="Plant J.">
        <title>Araport11: a complete reannotation of the Arabidopsis thaliana reference genome.</title>
        <authorList>
            <person name="Cheng C.Y."/>
            <person name="Krishnakumar V."/>
            <person name="Chan A.P."/>
            <person name="Thibaud-Nissen F."/>
            <person name="Schobel S."/>
            <person name="Town C.D."/>
        </authorList>
    </citation>
    <scope>GENOME REANNOTATION</scope>
    <source>
        <strain>cv. Columbia</strain>
    </source>
</reference>
<reference key="3">
    <citation type="journal article" date="2002" name="Science">
        <title>Functional annotation of a full-length Arabidopsis cDNA collection.</title>
        <authorList>
            <person name="Seki M."/>
            <person name="Narusaka M."/>
            <person name="Kamiya A."/>
            <person name="Ishida J."/>
            <person name="Satou M."/>
            <person name="Sakurai T."/>
            <person name="Nakajima M."/>
            <person name="Enju A."/>
            <person name="Akiyama K."/>
            <person name="Oono Y."/>
            <person name="Muramatsu M."/>
            <person name="Hayashizaki Y."/>
            <person name="Kawai J."/>
            <person name="Carninci P."/>
            <person name="Itoh M."/>
            <person name="Ishii Y."/>
            <person name="Arakawa T."/>
            <person name="Shibata K."/>
            <person name="Shinagawa A."/>
            <person name="Shinozaki K."/>
        </authorList>
    </citation>
    <scope>NUCLEOTIDE SEQUENCE [LARGE SCALE MRNA]</scope>
    <source>
        <strain>cv. Columbia</strain>
    </source>
</reference>
<reference key="4">
    <citation type="journal article" date="2003" name="Science">
        <title>Empirical analysis of transcriptional activity in the Arabidopsis genome.</title>
        <authorList>
            <person name="Yamada K."/>
            <person name="Lim J."/>
            <person name="Dale J.M."/>
            <person name="Chen H."/>
            <person name="Shinn P."/>
            <person name="Palm C.J."/>
            <person name="Southwick A.M."/>
            <person name="Wu H.C."/>
            <person name="Kim C.J."/>
            <person name="Nguyen M."/>
            <person name="Pham P.K."/>
            <person name="Cheuk R.F."/>
            <person name="Karlin-Newmann G."/>
            <person name="Liu S.X."/>
            <person name="Lam B."/>
            <person name="Sakano H."/>
            <person name="Wu T."/>
            <person name="Yu G."/>
            <person name="Miranda M."/>
            <person name="Quach H.L."/>
            <person name="Tripp M."/>
            <person name="Chang C.H."/>
            <person name="Lee J.M."/>
            <person name="Toriumi M.J."/>
            <person name="Chan M.M."/>
            <person name="Tang C.C."/>
            <person name="Onodera C.S."/>
            <person name="Deng J.M."/>
            <person name="Akiyama K."/>
            <person name="Ansari Y."/>
            <person name="Arakawa T."/>
            <person name="Banh J."/>
            <person name="Banno F."/>
            <person name="Bowser L."/>
            <person name="Brooks S.Y."/>
            <person name="Carninci P."/>
            <person name="Chao Q."/>
            <person name="Choy N."/>
            <person name="Enju A."/>
            <person name="Goldsmith A.D."/>
            <person name="Gurjal M."/>
            <person name="Hansen N.F."/>
            <person name="Hayashizaki Y."/>
            <person name="Johnson-Hopson C."/>
            <person name="Hsuan V.W."/>
            <person name="Iida K."/>
            <person name="Karnes M."/>
            <person name="Khan S."/>
            <person name="Koesema E."/>
            <person name="Ishida J."/>
            <person name="Jiang P.X."/>
            <person name="Jones T."/>
            <person name="Kawai J."/>
            <person name="Kamiya A."/>
            <person name="Meyers C."/>
            <person name="Nakajima M."/>
            <person name="Narusaka M."/>
            <person name="Seki M."/>
            <person name="Sakurai T."/>
            <person name="Satou M."/>
            <person name="Tamse R."/>
            <person name="Vaysberg M."/>
            <person name="Wallender E.K."/>
            <person name="Wong C."/>
            <person name="Yamamura Y."/>
            <person name="Yuan S."/>
            <person name="Shinozaki K."/>
            <person name="Davis R.W."/>
            <person name="Theologis A."/>
            <person name="Ecker J.R."/>
        </authorList>
    </citation>
    <scope>NUCLEOTIDE SEQUENCE [LARGE SCALE MRNA]</scope>
    <source>
        <strain>cv. Columbia</strain>
    </source>
</reference>
<reference key="5">
    <citation type="journal article" date="2010" name="J. Biol. Chem.">
        <title>Conserved and novel functions for Arabidopsis thaliana MIA40 in assembly of proteins in mitochondria and peroxisomes.</title>
        <authorList>
            <person name="Carrie C."/>
            <person name="Giraud E."/>
            <person name="Duncan O."/>
            <person name="Xu L."/>
            <person name="Wang Y."/>
            <person name="Huang S."/>
            <person name="Clifton R."/>
            <person name="Murcha M."/>
            <person name="Filipovska A."/>
            <person name="Rackham O."/>
            <person name="Vrielink A."/>
            <person name="Whelan J."/>
        </authorList>
    </citation>
    <scope>FUNCTION</scope>
    <scope>SUBCELLULAR LOCATION</scope>
    <scope>DISRUPTION PHENOTYPE</scope>
</reference>
<dbReference type="EMBL" id="AB007648">
    <property type="status" value="NOT_ANNOTATED_CDS"/>
    <property type="molecule type" value="Genomic_DNA"/>
</dbReference>
<dbReference type="EMBL" id="CP002688">
    <property type="protein sequence ID" value="AED93159.1"/>
    <property type="molecule type" value="Genomic_DNA"/>
</dbReference>
<dbReference type="EMBL" id="BT005086">
    <property type="protein sequence ID" value="AAO50619.1"/>
    <property type="molecule type" value="mRNA"/>
</dbReference>
<dbReference type="EMBL" id="AK117582">
    <property type="protein sequence ID" value="BAC42240.1"/>
    <property type="molecule type" value="mRNA"/>
</dbReference>
<dbReference type="RefSeq" id="NP_680211.1">
    <property type="nucleotide sequence ID" value="NM_147906.5"/>
</dbReference>
<dbReference type="SMR" id="Q8GYJ4"/>
<dbReference type="FunCoup" id="Q8GYJ4">
    <property type="interactions" value="1856"/>
</dbReference>
<dbReference type="STRING" id="3702.Q8GYJ4"/>
<dbReference type="PaxDb" id="3702-AT5G23395.1"/>
<dbReference type="ProteomicsDB" id="238366"/>
<dbReference type="EnsemblPlants" id="AT5G23395.1">
    <property type="protein sequence ID" value="AT5G23395.1"/>
    <property type="gene ID" value="AT5G23395"/>
</dbReference>
<dbReference type="GeneID" id="832404"/>
<dbReference type="Gramene" id="AT5G23395.1">
    <property type="protein sequence ID" value="AT5G23395.1"/>
    <property type="gene ID" value="AT5G23395"/>
</dbReference>
<dbReference type="KEGG" id="ath:AT5G23395"/>
<dbReference type="Araport" id="AT5G23395"/>
<dbReference type="TAIR" id="AT5G23395">
    <property type="gene designation" value="MIA40"/>
</dbReference>
<dbReference type="eggNOG" id="KOG4149">
    <property type="taxonomic scope" value="Eukaryota"/>
</dbReference>
<dbReference type="HOGENOM" id="CLU_120204_0_0_1"/>
<dbReference type="InParanoid" id="Q8GYJ4"/>
<dbReference type="OMA" id="CIKANPG"/>
<dbReference type="OrthoDB" id="7481291at2759"/>
<dbReference type="PhylomeDB" id="Q8GYJ4"/>
<dbReference type="PRO" id="PR:Q8GYJ4"/>
<dbReference type="Proteomes" id="UP000006548">
    <property type="component" value="Chromosome 5"/>
</dbReference>
<dbReference type="ExpressionAtlas" id="Q8GYJ4">
    <property type="expression patterns" value="baseline and differential"/>
</dbReference>
<dbReference type="GO" id="GO:0005758">
    <property type="term" value="C:mitochondrial intermembrane space"/>
    <property type="evidence" value="ECO:0007669"/>
    <property type="project" value="UniProtKB-SubCell"/>
</dbReference>
<dbReference type="GO" id="GO:0005739">
    <property type="term" value="C:mitochondrion"/>
    <property type="evidence" value="ECO:0000314"/>
    <property type="project" value="TAIR"/>
</dbReference>
<dbReference type="GO" id="GO:0005782">
    <property type="term" value="C:peroxisomal matrix"/>
    <property type="evidence" value="ECO:0007669"/>
    <property type="project" value="UniProtKB-SubCell"/>
</dbReference>
<dbReference type="GO" id="GO:0005777">
    <property type="term" value="C:peroxisome"/>
    <property type="evidence" value="ECO:0000314"/>
    <property type="project" value="TAIR"/>
</dbReference>
<dbReference type="GO" id="GO:0015035">
    <property type="term" value="F:protein-disulfide reductase activity"/>
    <property type="evidence" value="ECO:0007669"/>
    <property type="project" value="InterPro"/>
</dbReference>
<dbReference type="GO" id="GO:0045041">
    <property type="term" value="P:protein import into mitochondrial intermembrane space"/>
    <property type="evidence" value="ECO:0007669"/>
    <property type="project" value="InterPro"/>
</dbReference>
<dbReference type="GO" id="GO:0006626">
    <property type="term" value="P:protein targeting to mitochondrion"/>
    <property type="evidence" value="ECO:0000315"/>
    <property type="project" value="TAIR"/>
</dbReference>
<dbReference type="GO" id="GO:0006625">
    <property type="term" value="P:protein targeting to peroxisome"/>
    <property type="evidence" value="ECO:0000315"/>
    <property type="project" value="TAIR"/>
</dbReference>
<dbReference type="FunFam" id="1.10.287.2900:FF:000003">
    <property type="entry name" value="mitochondrial intermembrane space import and assembly protein 40"/>
    <property type="match status" value="1"/>
</dbReference>
<dbReference type="Gene3D" id="1.10.287.2900">
    <property type="match status" value="1"/>
</dbReference>
<dbReference type="InterPro" id="IPR010625">
    <property type="entry name" value="CHCH"/>
</dbReference>
<dbReference type="InterPro" id="IPR039289">
    <property type="entry name" value="CHCHD4"/>
</dbReference>
<dbReference type="PANTHER" id="PTHR21622">
    <property type="entry name" value="COILED-COIL-HELIX-COILED-COIL-HELIX DOMAIN CONTAINING 4"/>
    <property type="match status" value="1"/>
</dbReference>
<dbReference type="PANTHER" id="PTHR21622:SF0">
    <property type="entry name" value="COILED-COIL-HELIX-COILED-COIL-HELIX DOMAIN CONTAINING 4"/>
    <property type="match status" value="1"/>
</dbReference>
<dbReference type="Pfam" id="PF06747">
    <property type="entry name" value="CHCH"/>
    <property type="match status" value="1"/>
</dbReference>
<comment type="function">
    <text evidence="4 6">Required for the import and folding of small cysteine-containing proteins in the mitochondrial intermembrane space (Probable). Involved in the mitochondrial oxidative folding of the copper-zinc superoxide dismutase CSD1, the copper chaperone for superoxide dismutase CCS, and subunits of the mitochondrial membrane respiratory chain NADH dehydrogenase (Complex I). Involved in the peroxisomal oxidative folding of the copper-zinc superoxide dismutase CSD3, and the fatty acid beta-oxidation multifunctional protein AIM1 (PubMed:20829360).</text>
</comment>
<comment type="subcellular location">
    <subcellularLocation>
        <location evidence="4">Mitochondrion intermembrane space</location>
    </subcellularLocation>
    <subcellularLocation>
        <location evidence="4">Peroxisome matrix</location>
    </subcellularLocation>
</comment>
<comment type="disruption phenotype">
    <text evidence="4">No visible phenotype under normal growth conditions.</text>
</comment>
<keyword id="KW-1015">Disulfide bond</keyword>
<keyword id="KW-0496">Mitochondrion</keyword>
<keyword id="KW-0560">Oxidoreductase</keyword>
<keyword id="KW-0576">Peroxisome</keyword>
<keyword id="KW-0653">Protein transport</keyword>
<keyword id="KW-0676">Redox-active center</keyword>
<keyword id="KW-1185">Reference proteome</keyword>
<keyword id="KW-0811">Translocation</keyword>
<keyword id="KW-0813">Transport</keyword>
<protein>
    <recommendedName>
        <fullName evidence="6">Mitochondrial intermembrane space import and assembly protein 40 homolog</fullName>
        <shortName evidence="5">AtMIA40</shortName>
    </recommendedName>
</protein>
<name>MIA40_ARATH</name>
<organism>
    <name type="scientific">Arabidopsis thaliana</name>
    <name type="common">Mouse-ear cress</name>
    <dbReference type="NCBI Taxonomy" id="3702"/>
    <lineage>
        <taxon>Eukaryota</taxon>
        <taxon>Viridiplantae</taxon>
        <taxon>Streptophyta</taxon>
        <taxon>Embryophyta</taxon>
        <taxon>Tracheophyta</taxon>
        <taxon>Spermatophyta</taxon>
        <taxon>Magnoliopsida</taxon>
        <taxon>eudicotyledons</taxon>
        <taxon>Gunneridae</taxon>
        <taxon>Pentapetalae</taxon>
        <taxon>rosids</taxon>
        <taxon>malvids</taxon>
        <taxon>Brassicales</taxon>
        <taxon>Brassicaceae</taxon>
        <taxon>Camelineae</taxon>
        <taxon>Arabidopsis</taxon>
    </lineage>
</organism>
<sequence>MGQAQSDENSIPTTTTTNTPPPSANSPRDSEDTSSPSMDSLLAEAAAYGEDDNENESLEAKAQRALDCPCIADLRNGSCGSQFSEAFLCFLKSTAEEKGSDCVNPFVALQSCINANPDAFSKSVTGDEKETEKKEEQPPVQDHRIIPPLWAKDPPRSGNSKL</sequence>
<evidence type="ECO:0000250" key="1">
    <source>
        <dbReference type="UniProtKB" id="Q8N4Q1"/>
    </source>
</evidence>
<evidence type="ECO:0000255" key="2">
    <source>
        <dbReference type="PROSITE-ProRule" id="PRU01150"/>
    </source>
</evidence>
<evidence type="ECO:0000256" key="3">
    <source>
        <dbReference type="SAM" id="MobiDB-lite"/>
    </source>
</evidence>
<evidence type="ECO:0000269" key="4">
    <source>
    </source>
</evidence>
<evidence type="ECO:0000303" key="5">
    <source>
    </source>
</evidence>
<evidence type="ECO:0000305" key="6"/>
<evidence type="ECO:0000312" key="7">
    <source>
        <dbReference type="Araport" id="AT5G23395"/>
    </source>
</evidence>
<gene>
    <name evidence="5" type="primary">MIA40</name>
    <name evidence="7" type="ordered locus">At5g23395</name>
</gene>
<feature type="chain" id="PRO_0000437984" description="Mitochondrial intermembrane space import and assembly protein 40 homolog">
    <location>
        <begin position="1"/>
        <end position="162"/>
    </location>
</feature>
<feature type="domain" description="CHCH" evidence="2">
    <location>
        <begin position="76"/>
        <end position="120"/>
    </location>
</feature>
<feature type="region of interest" description="Disordered" evidence="3">
    <location>
        <begin position="1"/>
        <end position="61"/>
    </location>
</feature>
<feature type="region of interest" description="Disordered" evidence="3">
    <location>
        <begin position="119"/>
        <end position="162"/>
    </location>
</feature>
<feature type="short sequence motif" description="Cx9C motif 1" evidence="2">
    <location>
        <begin position="79"/>
        <end position="89"/>
    </location>
</feature>
<feature type="short sequence motif" description="Cx9C motif 2" evidence="2">
    <location>
        <begin position="102"/>
        <end position="112"/>
    </location>
</feature>
<feature type="compositionally biased region" description="Low complexity" evidence="3">
    <location>
        <begin position="9"/>
        <end position="18"/>
    </location>
</feature>
<feature type="compositionally biased region" description="Basic and acidic residues" evidence="3">
    <location>
        <begin position="125"/>
        <end position="145"/>
    </location>
</feature>
<feature type="disulfide bond" description="Redox-active" evidence="1">
    <location>
        <begin position="68"/>
        <end position="70"/>
    </location>
</feature>
<feature type="disulfide bond" evidence="2">
    <location>
        <begin position="79"/>
        <end position="112"/>
    </location>
</feature>
<feature type="disulfide bond" evidence="2">
    <location>
        <begin position="89"/>
        <end position="102"/>
    </location>
</feature>